<sequence>MGDLSNKAEGVGGKIKEGIGEATGNESLADEGRADQTKADIKEAVSDAGDKIKDGANKVLGSFQDKDPDVEHPEAVN</sequence>
<accession>Q8FU23</accession>
<dbReference type="EMBL" id="BA000035">
    <property type="protein sequence ID" value="BAC17008.1"/>
    <property type="molecule type" value="Genomic_DNA"/>
</dbReference>
<dbReference type="RefSeq" id="WP_006768492.1">
    <property type="nucleotide sequence ID" value="NC_004369.1"/>
</dbReference>
<dbReference type="SMR" id="Q8FU23"/>
<dbReference type="STRING" id="196164.gene:10740592"/>
<dbReference type="KEGG" id="cef:CE0198"/>
<dbReference type="eggNOG" id="COG3237">
    <property type="taxonomic scope" value="Bacteria"/>
</dbReference>
<dbReference type="HOGENOM" id="CLU_135567_1_2_11"/>
<dbReference type="OrthoDB" id="4419830at2"/>
<dbReference type="Proteomes" id="UP000001409">
    <property type="component" value="Chromosome"/>
</dbReference>
<dbReference type="Gene3D" id="1.10.1470.10">
    <property type="entry name" value="YjbJ"/>
    <property type="match status" value="1"/>
</dbReference>
<dbReference type="InterPro" id="IPR008462">
    <property type="entry name" value="CsbD"/>
</dbReference>
<dbReference type="InterPro" id="IPR036629">
    <property type="entry name" value="YjbJ_sf"/>
</dbReference>
<dbReference type="Pfam" id="PF05532">
    <property type="entry name" value="CsbD"/>
    <property type="match status" value="1"/>
</dbReference>
<dbReference type="SUPFAM" id="SSF69047">
    <property type="entry name" value="Hypothetical protein YjbJ"/>
    <property type="match status" value="1"/>
</dbReference>
<comment type="similarity">
    <text evidence="2">Belongs to the UPF0337 (CsbD) family.</text>
</comment>
<protein>
    <recommendedName>
        <fullName>UPF0337 protein CE0198</fullName>
    </recommendedName>
</protein>
<keyword id="KW-1185">Reference proteome</keyword>
<reference key="1">
    <citation type="journal article" date="2003" name="Genome Res.">
        <title>Comparative complete genome sequence analysis of the amino acid replacements responsible for the thermostability of Corynebacterium efficiens.</title>
        <authorList>
            <person name="Nishio Y."/>
            <person name="Nakamura Y."/>
            <person name="Kawarabayasi Y."/>
            <person name="Usuda Y."/>
            <person name="Kimura E."/>
            <person name="Sugimoto S."/>
            <person name="Matsui K."/>
            <person name="Yamagishi A."/>
            <person name="Kikuchi H."/>
            <person name="Ikeo K."/>
            <person name="Gojobori T."/>
        </authorList>
    </citation>
    <scope>NUCLEOTIDE SEQUENCE [LARGE SCALE GENOMIC DNA]</scope>
    <source>
        <strain>DSM 44549 / YS-314 / AJ 12310 / JCM 11189 / NBRC 100395</strain>
    </source>
</reference>
<evidence type="ECO:0000256" key="1">
    <source>
        <dbReference type="SAM" id="MobiDB-lite"/>
    </source>
</evidence>
<evidence type="ECO:0000305" key="2"/>
<gene>
    <name type="ordered locus">CE0198</name>
</gene>
<proteinExistence type="inferred from homology"/>
<feature type="chain" id="PRO_0000209997" description="UPF0337 protein CE0198">
    <location>
        <begin position="1"/>
        <end position="77"/>
    </location>
</feature>
<feature type="region of interest" description="Disordered" evidence="1">
    <location>
        <begin position="1"/>
        <end position="77"/>
    </location>
</feature>
<feature type="compositionally biased region" description="Basic and acidic residues" evidence="1">
    <location>
        <begin position="30"/>
        <end position="56"/>
    </location>
</feature>
<feature type="compositionally biased region" description="Basic and acidic residues" evidence="1">
    <location>
        <begin position="64"/>
        <end position="77"/>
    </location>
</feature>
<name>Y198_COREF</name>
<organism>
    <name type="scientific">Corynebacterium efficiens (strain DSM 44549 / YS-314 / AJ 12310 / JCM 11189 / NBRC 100395)</name>
    <dbReference type="NCBI Taxonomy" id="196164"/>
    <lineage>
        <taxon>Bacteria</taxon>
        <taxon>Bacillati</taxon>
        <taxon>Actinomycetota</taxon>
        <taxon>Actinomycetes</taxon>
        <taxon>Mycobacteriales</taxon>
        <taxon>Corynebacteriaceae</taxon>
        <taxon>Corynebacterium</taxon>
    </lineage>
</organism>